<keyword id="KW-0002">3D-structure</keyword>
<keyword id="KW-1185">Reference proteome</keyword>
<keyword id="KW-0687">Ribonucleoprotein</keyword>
<keyword id="KW-0689">Ribosomal protein</keyword>
<keyword id="KW-0694">RNA-binding</keyword>
<keyword id="KW-0699">rRNA-binding</keyword>
<proteinExistence type="evidence at protein level"/>
<evidence type="ECO:0000255" key="1">
    <source>
        <dbReference type="HAMAP-Rule" id="MF_01325"/>
    </source>
</evidence>
<evidence type="ECO:0000256" key="2">
    <source>
        <dbReference type="SAM" id="MobiDB-lite"/>
    </source>
</evidence>
<evidence type="ECO:0000305" key="3"/>
<evidence type="ECO:0007829" key="4">
    <source>
        <dbReference type="PDB" id="7OOD"/>
    </source>
</evidence>
<evidence type="ECO:0007829" key="5">
    <source>
        <dbReference type="PDB" id="8P8B"/>
    </source>
</evidence>
<dbReference type="EMBL" id="U00089">
    <property type="protein sequence ID" value="AAB96314.1"/>
    <property type="molecule type" value="Genomic_DNA"/>
</dbReference>
<dbReference type="PIR" id="S73992">
    <property type="entry name" value="S73992"/>
</dbReference>
<dbReference type="RefSeq" id="NP_109853.1">
    <property type="nucleotide sequence ID" value="NC_000912.1"/>
</dbReference>
<dbReference type="RefSeq" id="WP_010874522.1">
    <property type="nucleotide sequence ID" value="NZ_OU342337.1"/>
</dbReference>
<dbReference type="PDB" id="7OOD">
    <property type="method" value="EM"/>
    <property type="resolution" value="3.40 A"/>
    <property type="chains" value="b=1-287"/>
</dbReference>
<dbReference type="PDB" id="7P6Z">
    <property type="method" value="EM"/>
    <property type="resolution" value="3.50 A"/>
    <property type="chains" value="b=1-287"/>
</dbReference>
<dbReference type="PDB" id="7PAH">
    <property type="method" value="EM"/>
    <property type="resolution" value="9.50 A"/>
    <property type="chains" value="b=1-287"/>
</dbReference>
<dbReference type="PDB" id="7PAI">
    <property type="method" value="EM"/>
    <property type="resolution" value="6.70 A"/>
    <property type="chains" value="b=1-287"/>
</dbReference>
<dbReference type="PDB" id="7PAJ">
    <property type="method" value="EM"/>
    <property type="resolution" value="7.30 A"/>
    <property type="chains" value="b=1-287"/>
</dbReference>
<dbReference type="PDB" id="7PAK">
    <property type="method" value="EM"/>
    <property type="resolution" value="5.30 A"/>
    <property type="chains" value="b=1-287"/>
</dbReference>
<dbReference type="PDB" id="7PAL">
    <property type="method" value="EM"/>
    <property type="resolution" value="4.70 A"/>
    <property type="chains" value="b=1-287"/>
</dbReference>
<dbReference type="PDB" id="7PAM">
    <property type="method" value="EM"/>
    <property type="resolution" value="6.80 A"/>
    <property type="chains" value="b=1-287"/>
</dbReference>
<dbReference type="PDB" id="7PAN">
    <property type="method" value="EM"/>
    <property type="resolution" value="9.70 A"/>
    <property type="chains" value="b=1-287"/>
</dbReference>
<dbReference type="PDB" id="7PAO">
    <property type="method" value="EM"/>
    <property type="resolution" value="7.00 A"/>
    <property type="chains" value="b=1-287"/>
</dbReference>
<dbReference type="PDB" id="7PAQ">
    <property type="method" value="EM"/>
    <property type="resolution" value="8.90 A"/>
    <property type="chains" value="b=1-287"/>
</dbReference>
<dbReference type="PDB" id="7PAR">
    <property type="method" value="EM"/>
    <property type="resolution" value="8.20 A"/>
    <property type="chains" value="b=1-287"/>
</dbReference>
<dbReference type="PDB" id="7PAS">
    <property type="method" value="EM"/>
    <property type="resolution" value="16.00 A"/>
    <property type="chains" value="b=1-287"/>
</dbReference>
<dbReference type="PDB" id="7PAT">
    <property type="method" value="EM"/>
    <property type="resolution" value="9.20 A"/>
    <property type="chains" value="b=1-287"/>
</dbReference>
<dbReference type="PDB" id="7PAU">
    <property type="method" value="EM"/>
    <property type="resolution" value="8.30 A"/>
    <property type="chains" value="b=1-287"/>
</dbReference>
<dbReference type="PDB" id="7PH9">
    <property type="method" value="EM"/>
    <property type="resolution" value="8.70 A"/>
    <property type="chains" value="b=1-287"/>
</dbReference>
<dbReference type="PDB" id="7PHA">
    <property type="method" value="EM"/>
    <property type="resolution" value="8.50 A"/>
    <property type="chains" value="b=1-287"/>
</dbReference>
<dbReference type="PDB" id="7PHB">
    <property type="method" value="EM"/>
    <property type="resolution" value="4.90 A"/>
    <property type="chains" value="b=1-287"/>
</dbReference>
<dbReference type="PDB" id="7PHC">
    <property type="method" value="EM"/>
    <property type="resolution" value="9.90 A"/>
    <property type="chains" value="b=1-287"/>
</dbReference>
<dbReference type="PDB" id="7PI8">
    <property type="method" value="EM"/>
    <property type="resolution" value="8.90 A"/>
    <property type="chains" value="b=1-287"/>
</dbReference>
<dbReference type="PDB" id="7PI9">
    <property type="method" value="EM"/>
    <property type="resolution" value="6.30 A"/>
    <property type="chains" value="b=1-287"/>
</dbReference>
<dbReference type="PDB" id="7PIA">
    <property type="method" value="EM"/>
    <property type="resolution" value="13.60 A"/>
    <property type="chains" value="b=1-287"/>
</dbReference>
<dbReference type="PDB" id="7PIB">
    <property type="method" value="EM"/>
    <property type="resolution" value="4.70 A"/>
    <property type="chains" value="b=1-287"/>
</dbReference>
<dbReference type="PDB" id="7PIC">
    <property type="method" value="EM"/>
    <property type="resolution" value="9.10 A"/>
    <property type="chains" value="b=1-287"/>
</dbReference>
<dbReference type="PDB" id="7PIO">
    <property type="method" value="EM"/>
    <property type="resolution" value="9.50 A"/>
    <property type="chains" value="b=1-287"/>
</dbReference>
<dbReference type="PDB" id="7PIP">
    <property type="method" value="EM"/>
    <property type="resolution" value="9.30 A"/>
    <property type="chains" value="b=1-287"/>
</dbReference>
<dbReference type="PDB" id="7PIQ">
    <property type="method" value="EM"/>
    <property type="resolution" value="9.70 A"/>
    <property type="chains" value="b=1-287"/>
</dbReference>
<dbReference type="PDB" id="7PIR">
    <property type="method" value="EM"/>
    <property type="resolution" value="12.10 A"/>
    <property type="chains" value="b=1-287"/>
</dbReference>
<dbReference type="PDB" id="7PIS">
    <property type="method" value="EM"/>
    <property type="resolution" value="15.00 A"/>
    <property type="chains" value="b=1-287"/>
</dbReference>
<dbReference type="PDB" id="7PIT">
    <property type="method" value="EM"/>
    <property type="resolution" value="5.70 A"/>
    <property type="chains" value="b=1-287"/>
</dbReference>
<dbReference type="PDB" id="8P7X">
    <property type="method" value="EM"/>
    <property type="resolution" value="3.03 A"/>
    <property type="chains" value="b=1-287"/>
</dbReference>
<dbReference type="PDB" id="8P7Y">
    <property type="method" value="EM"/>
    <property type="resolution" value="3.70 A"/>
    <property type="chains" value="b=1-287"/>
</dbReference>
<dbReference type="PDB" id="8P8B">
    <property type="method" value="EM"/>
    <property type="resolution" value="2.90 A"/>
    <property type="chains" value="b=1-287"/>
</dbReference>
<dbReference type="PDB" id="8P8V">
    <property type="method" value="EM"/>
    <property type="resolution" value="8.70 A"/>
    <property type="chains" value="b=1-287"/>
</dbReference>
<dbReference type="PDB" id="8P8W">
    <property type="method" value="EM"/>
    <property type="resolution" value="8.70 A"/>
    <property type="chains" value="b=1-287"/>
</dbReference>
<dbReference type="PDBsum" id="7OOD"/>
<dbReference type="PDBsum" id="7P6Z"/>
<dbReference type="PDBsum" id="7PAH"/>
<dbReference type="PDBsum" id="7PAI"/>
<dbReference type="PDBsum" id="7PAJ"/>
<dbReference type="PDBsum" id="7PAK"/>
<dbReference type="PDBsum" id="7PAL"/>
<dbReference type="PDBsum" id="7PAM"/>
<dbReference type="PDBsum" id="7PAN"/>
<dbReference type="PDBsum" id="7PAO"/>
<dbReference type="PDBsum" id="7PAQ"/>
<dbReference type="PDBsum" id="7PAR"/>
<dbReference type="PDBsum" id="7PAS"/>
<dbReference type="PDBsum" id="7PAT"/>
<dbReference type="PDBsum" id="7PAU"/>
<dbReference type="PDBsum" id="7PH9"/>
<dbReference type="PDBsum" id="7PHA"/>
<dbReference type="PDBsum" id="7PHB"/>
<dbReference type="PDBsum" id="7PHC"/>
<dbReference type="PDBsum" id="7PI8"/>
<dbReference type="PDBsum" id="7PI9"/>
<dbReference type="PDBsum" id="7PIA"/>
<dbReference type="PDBsum" id="7PIB"/>
<dbReference type="PDBsum" id="7PIC"/>
<dbReference type="PDBsum" id="7PIO"/>
<dbReference type="PDBsum" id="7PIP"/>
<dbReference type="PDBsum" id="7PIQ"/>
<dbReference type="PDBsum" id="7PIR"/>
<dbReference type="PDBsum" id="7PIS"/>
<dbReference type="PDBsum" id="7PIT"/>
<dbReference type="PDBsum" id="8P7X"/>
<dbReference type="PDBsum" id="8P7Y"/>
<dbReference type="PDBsum" id="8P8B"/>
<dbReference type="PDBsum" id="8P8V"/>
<dbReference type="PDBsum" id="8P8W"/>
<dbReference type="EMDB" id="EMD-13234"/>
<dbReference type="EMDB" id="EMD-13272"/>
<dbReference type="EMDB" id="EMD-13273"/>
<dbReference type="EMDB" id="EMD-13274"/>
<dbReference type="EMDB" id="EMD-13275"/>
<dbReference type="EMDB" id="EMD-13276"/>
<dbReference type="EMDB" id="EMD-13277"/>
<dbReference type="EMDB" id="EMD-13278"/>
<dbReference type="EMDB" id="EMD-13279"/>
<dbReference type="EMDB" id="EMD-13280"/>
<dbReference type="EMDB" id="EMD-13281"/>
<dbReference type="EMDB" id="EMD-13282"/>
<dbReference type="EMDB" id="EMD-13285"/>
<dbReference type="EMDB" id="EMD-13286"/>
<dbReference type="EMDB" id="EMD-13410"/>
<dbReference type="EMDB" id="EMD-13411"/>
<dbReference type="EMDB" id="EMD-13412"/>
<dbReference type="EMDB" id="EMD-13413"/>
<dbReference type="EMDB" id="EMD-13432"/>
<dbReference type="EMDB" id="EMD-13433"/>
<dbReference type="EMDB" id="EMD-13434"/>
<dbReference type="EMDB" id="EMD-13435"/>
<dbReference type="EMDB" id="EMD-13436"/>
<dbReference type="EMDB" id="EMD-13445"/>
<dbReference type="EMDB" id="EMD-13446"/>
<dbReference type="EMDB" id="EMD-13447"/>
<dbReference type="EMDB" id="EMD-13448"/>
<dbReference type="EMDB" id="EMD-13449"/>
<dbReference type="EMDB" id="EMD-13450"/>
<dbReference type="SMR" id="P75580"/>
<dbReference type="IntAct" id="P75580">
    <property type="interactions" value="12"/>
</dbReference>
<dbReference type="STRING" id="272634.MPN_165"/>
<dbReference type="EnsemblBacteria" id="AAB96314">
    <property type="protein sequence ID" value="AAB96314"/>
    <property type="gene ID" value="MPN_165"/>
</dbReference>
<dbReference type="KEGG" id="mpn:MPN_165"/>
<dbReference type="PATRIC" id="fig|272634.6.peg.183"/>
<dbReference type="HOGENOM" id="CLU_044142_4_0_14"/>
<dbReference type="OrthoDB" id="9806135at2"/>
<dbReference type="BioCyc" id="MPNE272634:G1GJ3-274-MONOMER"/>
<dbReference type="Proteomes" id="UP000000808">
    <property type="component" value="Chromosome"/>
</dbReference>
<dbReference type="GO" id="GO:0022625">
    <property type="term" value="C:cytosolic large ribosomal subunit"/>
    <property type="evidence" value="ECO:0007669"/>
    <property type="project" value="TreeGrafter"/>
</dbReference>
<dbReference type="GO" id="GO:0019843">
    <property type="term" value="F:rRNA binding"/>
    <property type="evidence" value="ECO:0007669"/>
    <property type="project" value="UniProtKB-UniRule"/>
</dbReference>
<dbReference type="GO" id="GO:0003735">
    <property type="term" value="F:structural constituent of ribosome"/>
    <property type="evidence" value="ECO:0007669"/>
    <property type="project" value="InterPro"/>
</dbReference>
<dbReference type="GO" id="GO:0006412">
    <property type="term" value="P:translation"/>
    <property type="evidence" value="ECO:0007669"/>
    <property type="project" value="UniProtKB-UniRule"/>
</dbReference>
<dbReference type="Gene3D" id="3.30.160.810">
    <property type="match status" value="1"/>
</dbReference>
<dbReference type="Gene3D" id="2.40.30.10">
    <property type="entry name" value="Translation factors"/>
    <property type="match status" value="1"/>
</dbReference>
<dbReference type="HAMAP" id="MF_01325_B">
    <property type="entry name" value="Ribosomal_uL3_B"/>
    <property type="match status" value="1"/>
</dbReference>
<dbReference type="InterPro" id="IPR000597">
    <property type="entry name" value="Ribosomal_uL3"/>
</dbReference>
<dbReference type="InterPro" id="IPR019927">
    <property type="entry name" value="Ribosomal_uL3_bac/org-type"/>
</dbReference>
<dbReference type="InterPro" id="IPR019926">
    <property type="entry name" value="Ribosomal_uL3_CS"/>
</dbReference>
<dbReference type="InterPro" id="IPR009000">
    <property type="entry name" value="Transl_B-barrel_sf"/>
</dbReference>
<dbReference type="NCBIfam" id="TIGR03625">
    <property type="entry name" value="L3_bact"/>
    <property type="match status" value="1"/>
</dbReference>
<dbReference type="PANTHER" id="PTHR11229">
    <property type="entry name" value="50S RIBOSOMAL PROTEIN L3"/>
    <property type="match status" value="1"/>
</dbReference>
<dbReference type="PANTHER" id="PTHR11229:SF16">
    <property type="entry name" value="LARGE RIBOSOMAL SUBUNIT PROTEIN UL3C"/>
    <property type="match status" value="1"/>
</dbReference>
<dbReference type="Pfam" id="PF00297">
    <property type="entry name" value="Ribosomal_L3"/>
    <property type="match status" value="1"/>
</dbReference>
<dbReference type="SUPFAM" id="SSF50447">
    <property type="entry name" value="Translation proteins"/>
    <property type="match status" value="1"/>
</dbReference>
<dbReference type="PROSITE" id="PS00474">
    <property type="entry name" value="RIBOSOMAL_L3"/>
    <property type="match status" value="1"/>
</dbReference>
<reference key="1">
    <citation type="journal article" date="1996" name="Nucleic Acids Res.">
        <title>Complete sequence analysis of the genome of the bacterium Mycoplasma pneumoniae.</title>
        <authorList>
            <person name="Himmelreich R."/>
            <person name="Hilbert H."/>
            <person name="Plagens H."/>
            <person name="Pirkl E."/>
            <person name="Li B.-C."/>
            <person name="Herrmann R."/>
        </authorList>
    </citation>
    <scope>NUCLEOTIDE SEQUENCE [LARGE SCALE GENOMIC DNA]</scope>
    <source>
        <strain>ATCC 29342 / M129 / Subtype 1</strain>
    </source>
</reference>
<feature type="chain" id="PRO_0000077123" description="Large ribosomal subunit protein uL3">
    <location>
        <begin position="1"/>
        <end position="287"/>
    </location>
</feature>
<feature type="region of interest" description="Disordered" evidence="2">
    <location>
        <begin position="228"/>
        <end position="287"/>
    </location>
</feature>
<feature type="compositionally biased region" description="Basic and acidic residues" evidence="2">
    <location>
        <begin position="269"/>
        <end position="287"/>
    </location>
</feature>
<feature type="strand" evidence="5">
    <location>
        <begin position="5"/>
        <end position="18"/>
    </location>
</feature>
<feature type="turn" evidence="5">
    <location>
        <begin position="19"/>
        <end position="21"/>
    </location>
</feature>
<feature type="strand" evidence="5">
    <location>
        <begin position="22"/>
        <end position="30"/>
    </location>
</feature>
<feature type="strand" evidence="5">
    <location>
        <begin position="34"/>
        <end position="40"/>
    </location>
</feature>
<feature type="helix" evidence="5">
    <location>
        <begin position="42"/>
        <end position="45"/>
    </location>
</feature>
<feature type="strand" evidence="5">
    <location>
        <begin position="49"/>
        <end position="56"/>
    </location>
</feature>
<feature type="helix" evidence="5">
    <location>
        <begin position="59"/>
        <end position="61"/>
    </location>
</feature>
<feature type="helix" evidence="5">
    <location>
        <begin position="64"/>
        <end position="73"/>
    </location>
</feature>
<feature type="strand" evidence="5">
    <location>
        <begin position="78"/>
        <end position="85"/>
    </location>
</feature>
<feature type="helix" evidence="5">
    <location>
        <begin position="98"/>
        <end position="101"/>
    </location>
</feature>
<feature type="strand" evidence="5">
    <location>
        <begin position="104"/>
        <end position="113"/>
    </location>
</feature>
<feature type="strand" evidence="5">
    <location>
        <begin position="118"/>
        <end position="120"/>
    </location>
</feature>
<feature type="helix" evidence="5">
    <location>
        <begin position="122"/>
        <end position="126"/>
    </location>
</feature>
<feature type="strand" evidence="5">
    <location>
        <begin position="134"/>
        <end position="136"/>
    </location>
</feature>
<feature type="turn" evidence="4">
    <location>
        <begin position="153"/>
        <end position="155"/>
    </location>
</feature>
<feature type="strand" evidence="5">
    <location>
        <begin position="166"/>
        <end position="171"/>
    </location>
</feature>
<feature type="strand" evidence="5">
    <location>
        <begin position="173"/>
        <end position="185"/>
    </location>
</feature>
<feature type="turn" evidence="5">
    <location>
        <begin position="186"/>
        <end position="189"/>
    </location>
</feature>
<feature type="strand" evidence="5">
    <location>
        <begin position="190"/>
        <end position="195"/>
    </location>
</feature>
<feature type="strand" evidence="5">
    <location>
        <begin position="204"/>
        <end position="209"/>
    </location>
</feature>
<feature type="strand" evidence="5">
    <location>
        <begin position="211"/>
        <end position="215"/>
    </location>
</feature>
<name>RL3_MYCPN</name>
<protein>
    <recommendedName>
        <fullName evidence="1">Large ribosomal subunit protein uL3</fullName>
    </recommendedName>
    <alternativeName>
        <fullName evidence="3">50S ribosomal protein L3</fullName>
    </alternativeName>
</protein>
<gene>
    <name evidence="1" type="primary">rplC</name>
    <name type="ordered locus">MPN_165</name>
    <name type="ORF">MP666</name>
</gene>
<organism>
    <name type="scientific">Mycoplasma pneumoniae (strain ATCC 29342 / M129 / Subtype 1)</name>
    <name type="common">Mycoplasmoides pneumoniae</name>
    <dbReference type="NCBI Taxonomy" id="272634"/>
    <lineage>
        <taxon>Bacteria</taxon>
        <taxon>Bacillati</taxon>
        <taxon>Mycoplasmatota</taxon>
        <taxon>Mycoplasmoidales</taxon>
        <taxon>Mycoplasmoidaceae</taxon>
        <taxon>Mycoplasmoides</taxon>
    </lineage>
</organism>
<accession>P75580</accession>
<sequence>MEIRGIFGVKVGMSQVFTTNNERLPITVIYCEPNQVAGVKTEAKDKYSATLLSFDTVENKKLNKPQQGFFEKNNLKPTKHLQEIRNMTGFEMGQQITPQNLFQVGEYVDVSAISKGRGFTGAIKRWNFKIGPLGHGAGYPHRFQGSVQAGRGGASAQRVFKGKKMSGHYGHEKVTVQNLRIVGFDEANMLVLVSGAIAGPEGGVVLIRTAKKKPGVVKPIELAVQTEKAPEAKPAKLSKKKQAKELAKAQAANQQTVEAKVDTPVVEPKPTEVKKAAPVVEKKGEDK</sequence>
<comment type="function">
    <text evidence="1">One of the primary rRNA binding proteins, it binds directly near the 3'-end of the 23S rRNA, where it nucleates assembly of the 50S subunit.</text>
</comment>
<comment type="subunit">
    <text evidence="1">Part of the 50S ribosomal subunit. Forms a cluster with proteins L14 and L19.</text>
</comment>
<comment type="similarity">
    <text evidence="1">Belongs to the universal ribosomal protein uL3 family.</text>
</comment>